<comment type="function">
    <text evidence="1">This protein is located at the 30S-50S ribosomal subunit interface and may play a role in the structure and function of the aminoacyl-tRNA binding site.</text>
</comment>
<comment type="similarity">
    <text evidence="1">Belongs to the bacterial ribosomal protein bL19 family.</text>
</comment>
<name>RL19_BRUSU</name>
<dbReference type="EMBL" id="AE014291">
    <property type="protein sequence ID" value="AAN30800.1"/>
    <property type="molecule type" value="Genomic_DNA"/>
</dbReference>
<dbReference type="EMBL" id="CP002997">
    <property type="protein sequence ID" value="AEM19217.1"/>
    <property type="molecule type" value="Genomic_DNA"/>
</dbReference>
<dbReference type="RefSeq" id="WP_002964975.1">
    <property type="nucleotide sequence ID" value="NZ_KN046804.1"/>
</dbReference>
<dbReference type="SMR" id="P66079"/>
<dbReference type="GeneID" id="97534805"/>
<dbReference type="KEGG" id="bms:BR1907"/>
<dbReference type="KEGG" id="bsi:BS1330_I1901"/>
<dbReference type="PATRIC" id="fig|204722.21.peg.2547"/>
<dbReference type="HOGENOM" id="CLU_103507_0_2_5"/>
<dbReference type="PhylomeDB" id="P66079"/>
<dbReference type="PRO" id="PR:P66079"/>
<dbReference type="Proteomes" id="UP000007104">
    <property type="component" value="Chromosome I"/>
</dbReference>
<dbReference type="GO" id="GO:0022625">
    <property type="term" value="C:cytosolic large ribosomal subunit"/>
    <property type="evidence" value="ECO:0007669"/>
    <property type="project" value="TreeGrafter"/>
</dbReference>
<dbReference type="GO" id="GO:0003735">
    <property type="term" value="F:structural constituent of ribosome"/>
    <property type="evidence" value="ECO:0007669"/>
    <property type="project" value="InterPro"/>
</dbReference>
<dbReference type="GO" id="GO:0006412">
    <property type="term" value="P:translation"/>
    <property type="evidence" value="ECO:0007669"/>
    <property type="project" value="UniProtKB-UniRule"/>
</dbReference>
<dbReference type="FunFam" id="2.30.30.790:FF:000001">
    <property type="entry name" value="50S ribosomal protein L19"/>
    <property type="match status" value="1"/>
</dbReference>
<dbReference type="Gene3D" id="2.30.30.790">
    <property type="match status" value="1"/>
</dbReference>
<dbReference type="HAMAP" id="MF_00402">
    <property type="entry name" value="Ribosomal_bL19"/>
    <property type="match status" value="1"/>
</dbReference>
<dbReference type="InterPro" id="IPR001857">
    <property type="entry name" value="Ribosomal_bL19"/>
</dbReference>
<dbReference type="InterPro" id="IPR018257">
    <property type="entry name" value="Ribosomal_bL19_CS"/>
</dbReference>
<dbReference type="InterPro" id="IPR038657">
    <property type="entry name" value="Ribosomal_bL19_sf"/>
</dbReference>
<dbReference type="InterPro" id="IPR008991">
    <property type="entry name" value="Translation_prot_SH3-like_sf"/>
</dbReference>
<dbReference type="NCBIfam" id="TIGR01024">
    <property type="entry name" value="rplS_bact"/>
    <property type="match status" value="1"/>
</dbReference>
<dbReference type="PANTHER" id="PTHR15680:SF9">
    <property type="entry name" value="LARGE RIBOSOMAL SUBUNIT PROTEIN BL19M"/>
    <property type="match status" value="1"/>
</dbReference>
<dbReference type="PANTHER" id="PTHR15680">
    <property type="entry name" value="RIBOSOMAL PROTEIN L19"/>
    <property type="match status" value="1"/>
</dbReference>
<dbReference type="Pfam" id="PF01245">
    <property type="entry name" value="Ribosomal_L19"/>
    <property type="match status" value="1"/>
</dbReference>
<dbReference type="PIRSF" id="PIRSF002191">
    <property type="entry name" value="Ribosomal_L19"/>
    <property type="match status" value="1"/>
</dbReference>
<dbReference type="PRINTS" id="PR00061">
    <property type="entry name" value="RIBOSOMALL19"/>
</dbReference>
<dbReference type="SUPFAM" id="SSF50104">
    <property type="entry name" value="Translation proteins SH3-like domain"/>
    <property type="match status" value="1"/>
</dbReference>
<dbReference type="PROSITE" id="PS01015">
    <property type="entry name" value="RIBOSOMAL_L19"/>
    <property type="match status" value="1"/>
</dbReference>
<protein>
    <recommendedName>
        <fullName evidence="1">Large ribosomal subunit protein bL19</fullName>
    </recommendedName>
    <alternativeName>
        <fullName evidence="2">50S ribosomal protein L19</fullName>
    </alternativeName>
</protein>
<reference key="1">
    <citation type="journal article" date="2002" name="Proc. Natl. Acad. Sci. U.S.A.">
        <title>The Brucella suis genome reveals fundamental similarities between animal and plant pathogens and symbionts.</title>
        <authorList>
            <person name="Paulsen I.T."/>
            <person name="Seshadri R."/>
            <person name="Nelson K.E."/>
            <person name="Eisen J.A."/>
            <person name="Heidelberg J.F."/>
            <person name="Read T.D."/>
            <person name="Dodson R.J."/>
            <person name="Umayam L.A."/>
            <person name="Brinkac L.M."/>
            <person name="Beanan M.J."/>
            <person name="Daugherty S.C."/>
            <person name="DeBoy R.T."/>
            <person name="Durkin A.S."/>
            <person name="Kolonay J.F."/>
            <person name="Madupu R."/>
            <person name="Nelson W.C."/>
            <person name="Ayodeji B."/>
            <person name="Kraul M."/>
            <person name="Shetty J."/>
            <person name="Malek J.A."/>
            <person name="Van Aken S.E."/>
            <person name="Riedmuller S."/>
            <person name="Tettelin H."/>
            <person name="Gill S.R."/>
            <person name="White O."/>
            <person name="Salzberg S.L."/>
            <person name="Hoover D.L."/>
            <person name="Lindler L.E."/>
            <person name="Halling S.M."/>
            <person name="Boyle S.M."/>
            <person name="Fraser C.M."/>
        </authorList>
    </citation>
    <scope>NUCLEOTIDE SEQUENCE [LARGE SCALE GENOMIC DNA]</scope>
    <source>
        <strain>1330</strain>
    </source>
</reference>
<reference key="2">
    <citation type="journal article" date="2011" name="J. Bacteriol.">
        <title>Revised genome sequence of Brucella suis 1330.</title>
        <authorList>
            <person name="Tae H."/>
            <person name="Shallom S."/>
            <person name="Settlage R."/>
            <person name="Preston D."/>
            <person name="Adams L.G."/>
            <person name="Garner H.R."/>
        </authorList>
    </citation>
    <scope>NUCLEOTIDE SEQUENCE [LARGE SCALE GENOMIC DNA]</scope>
    <source>
        <strain>1330</strain>
    </source>
</reference>
<sequence length="145" mass="16077">MTDIIRQLEAEQAAKIEEKRKLPDFQPGDTVRVQVRVTEGTRTRVQAYEGVCIARSGAGLNENFTVRKISYGEGVERVFPVYSPIVEGVEVVRRGKVRRAKLYYLRGLTGKAARIAEKKDNRTKAERAADKLAAAKAEAAKTAAE</sequence>
<feature type="chain" id="PRO_0000163425" description="Large ribosomal subunit protein bL19">
    <location>
        <begin position="1"/>
        <end position="145"/>
    </location>
</feature>
<keyword id="KW-0687">Ribonucleoprotein</keyword>
<keyword id="KW-0689">Ribosomal protein</keyword>
<proteinExistence type="inferred from homology"/>
<organism>
    <name type="scientific">Brucella suis biovar 1 (strain 1330)</name>
    <dbReference type="NCBI Taxonomy" id="204722"/>
    <lineage>
        <taxon>Bacteria</taxon>
        <taxon>Pseudomonadati</taxon>
        <taxon>Pseudomonadota</taxon>
        <taxon>Alphaproteobacteria</taxon>
        <taxon>Hyphomicrobiales</taxon>
        <taxon>Brucellaceae</taxon>
        <taxon>Brucella/Ochrobactrum group</taxon>
        <taxon>Brucella</taxon>
    </lineage>
</organism>
<accession>P66079</accession>
<accession>G0K851</accession>
<accession>Q8YJD0</accession>
<evidence type="ECO:0000255" key="1">
    <source>
        <dbReference type="HAMAP-Rule" id="MF_00402"/>
    </source>
</evidence>
<evidence type="ECO:0000305" key="2"/>
<gene>
    <name evidence="1" type="primary">rplS</name>
    <name type="ordered locus">BR1907</name>
    <name type="ordered locus">BS1330_I1901</name>
</gene>